<dbReference type="EC" id="3.4.21.53"/>
<dbReference type="EMBL" id="AE000783">
    <property type="protein sequence ID" value="AAC66962.2"/>
    <property type="molecule type" value="Genomic_DNA"/>
</dbReference>
<dbReference type="PIR" id="D70176">
    <property type="entry name" value="D70176"/>
</dbReference>
<dbReference type="RefSeq" id="NP_212747.2">
    <property type="nucleotide sequence ID" value="NC_001318.1"/>
</dbReference>
<dbReference type="SMR" id="O51558"/>
<dbReference type="STRING" id="224326.BB_0613"/>
<dbReference type="MEROPS" id="S16.009"/>
<dbReference type="PaxDb" id="224326-BB_0613"/>
<dbReference type="EnsemblBacteria" id="AAC66962">
    <property type="protein sequence ID" value="AAC66962"/>
    <property type="gene ID" value="BB_0613"/>
</dbReference>
<dbReference type="KEGG" id="bbu:BB_0613"/>
<dbReference type="PATRIC" id="fig|224326.49.peg.1003"/>
<dbReference type="HOGENOM" id="CLU_004109_4_3_12"/>
<dbReference type="OrthoDB" id="9803599at2"/>
<dbReference type="BRENDA" id="3.4.21.53">
    <property type="organism ID" value="902"/>
</dbReference>
<dbReference type="Proteomes" id="UP000001807">
    <property type="component" value="Chromosome"/>
</dbReference>
<dbReference type="GO" id="GO:0005737">
    <property type="term" value="C:cytoplasm"/>
    <property type="evidence" value="ECO:0007669"/>
    <property type="project" value="UniProtKB-SubCell"/>
</dbReference>
<dbReference type="GO" id="GO:0005524">
    <property type="term" value="F:ATP binding"/>
    <property type="evidence" value="ECO:0007669"/>
    <property type="project" value="UniProtKB-KW"/>
</dbReference>
<dbReference type="GO" id="GO:0016887">
    <property type="term" value="F:ATP hydrolysis activity"/>
    <property type="evidence" value="ECO:0007669"/>
    <property type="project" value="InterPro"/>
</dbReference>
<dbReference type="GO" id="GO:0004176">
    <property type="term" value="F:ATP-dependent peptidase activity"/>
    <property type="evidence" value="ECO:0007669"/>
    <property type="project" value="InterPro"/>
</dbReference>
<dbReference type="GO" id="GO:0004252">
    <property type="term" value="F:serine-type endopeptidase activity"/>
    <property type="evidence" value="ECO:0007669"/>
    <property type="project" value="UniProtKB-EC"/>
</dbReference>
<dbReference type="GO" id="GO:0030163">
    <property type="term" value="P:protein catabolic process"/>
    <property type="evidence" value="ECO:0007669"/>
    <property type="project" value="InterPro"/>
</dbReference>
<dbReference type="GO" id="GO:0006508">
    <property type="term" value="P:proteolysis"/>
    <property type="evidence" value="ECO:0007669"/>
    <property type="project" value="UniProtKB-KW"/>
</dbReference>
<dbReference type="CDD" id="cd19500">
    <property type="entry name" value="RecA-like_Lon"/>
    <property type="match status" value="1"/>
</dbReference>
<dbReference type="FunFam" id="3.40.50.300:FF:000021">
    <property type="entry name" value="Lon protease homolog"/>
    <property type="match status" value="1"/>
</dbReference>
<dbReference type="Gene3D" id="1.10.8.60">
    <property type="match status" value="1"/>
</dbReference>
<dbReference type="Gene3D" id="1.20.5.5270">
    <property type="match status" value="1"/>
</dbReference>
<dbReference type="Gene3D" id="1.20.58.1480">
    <property type="match status" value="1"/>
</dbReference>
<dbReference type="Gene3D" id="3.30.230.10">
    <property type="match status" value="1"/>
</dbReference>
<dbReference type="Gene3D" id="2.30.130.40">
    <property type="entry name" value="LON domain-like"/>
    <property type="match status" value="1"/>
</dbReference>
<dbReference type="Gene3D" id="3.40.50.300">
    <property type="entry name" value="P-loop containing nucleotide triphosphate hydrolases"/>
    <property type="match status" value="1"/>
</dbReference>
<dbReference type="InterPro" id="IPR003593">
    <property type="entry name" value="AAA+_ATPase"/>
</dbReference>
<dbReference type="InterPro" id="IPR003959">
    <property type="entry name" value="ATPase_AAA_core"/>
</dbReference>
<dbReference type="InterPro" id="IPR004815">
    <property type="entry name" value="Lon_bac/euk-typ"/>
</dbReference>
<dbReference type="InterPro" id="IPR054594">
    <property type="entry name" value="Lon_lid"/>
</dbReference>
<dbReference type="InterPro" id="IPR008269">
    <property type="entry name" value="Lon_proteolytic"/>
</dbReference>
<dbReference type="InterPro" id="IPR027065">
    <property type="entry name" value="Lon_Prtase"/>
</dbReference>
<dbReference type="InterPro" id="IPR003111">
    <property type="entry name" value="Lon_prtase_N"/>
</dbReference>
<dbReference type="InterPro" id="IPR046336">
    <property type="entry name" value="Lon_prtase_N_sf"/>
</dbReference>
<dbReference type="InterPro" id="IPR027417">
    <property type="entry name" value="P-loop_NTPase"/>
</dbReference>
<dbReference type="InterPro" id="IPR008268">
    <property type="entry name" value="Peptidase_S16_AS"/>
</dbReference>
<dbReference type="InterPro" id="IPR015947">
    <property type="entry name" value="PUA-like_sf"/>
</dbReference>
<dbReference type="InterPro" id="IPR020568">
    <property type="entry name" value="Ribosomal_Su5_D2-typ_SF"/>
</dbReference>
<dbReference type="InterPro" id="IPR014721">
    <property type="entry name" value="Ribsml_uS5_D2-typ_fold_subgr"/>
</dbReference>
<dbReference type="NCBIfam" id="TIGR00763">
    <property type="entry name" value="lon"/>
    <property type="match status" value="1"/>
</dbReference>
<dbReference type="PANTHER" id="PTHR10046">
    <property type="entry name" value="ATP DEPENDENT LON PROTEASE FAMILY MEMBER"/>
    <property type="match status" value="1"/>
</dbReference>
<dbReference type="Pfam" id="PF00004">
    <property type="entry name" value="AAA"/>
    <property type="match status" value="1"/>
</dbReference>
<dbReference type="Pfam" id="PF05362">
    <property type="entry name" value="Lon_C"/>
    <property type="match status" value="1"/>
</dbReference>
<dbReference type="Pfam" id="PF22667">
    <property type="entry name" value="Lon_lid"/>
    <property type="match status" value="1"/>
</dbReference>
<dbReference type="Pfam" id="PF02190">
    <property type="entry name" value="LON_substr_bdg"/>
    <property type="match status" value="1"/>
</dbReference>
<dbReference type="PIRSF" id="PIRSF001174">
    <property type="entry name" value="Lon_proteas"/>
    <property type="match status" value="1"/>
</dbReference>
<dbReference type="PRINTS" id="PR00830">
    <property type="entry name" value="ENDOLAPTASE"/>
</dbReference>
<dbReference type="SMART" id="SM00382">
    <property type="entry name" value="AAA"/>
    <property type="match status" value="1"/>
</dbReference>
<dbReference type="SMART" id="SM00464">
    <property type="entry name" value="LON"/>
    <property type="match status" value="1"/>
</dbReference>
<dbReference type="SUPFAM" id="SSF52540">
    <property type="entry name" value="P-loop containing nucleoside triphosphate hydrolases"/>
    <property type="match status" value="1"/>
</dbReference>
<dbReference type="SUPFAM" id="SSF88697">
    <property type="entry name" value="PUA domain-like"/>
    <property type="match status" value="1"/>
</dbReference>
<dbReference type="SUPFAM" id="SSF54211">
    <property type="entry name" value="Ribosomal protein S5 domain 2-like"/>
    <property type="match status" value="1"/>
</dbReference>
<dbReference type="PROSITE" id="PS51787">
    <property type="entry name" value="LON_N"/>
    <property type="match status" value="1"/>
</dbReference>
<dbReference type="PROSITE" id="PS51786">
    <property type="entry name" value="LON_PROTEOLYTIC"/>
    <property type="match status" value="1"/>
</dbReference>
<dbReference type="PROSITE" id="PS01046">
    <property type="entry name" value="LON_SER"/>
    <property type="match status" value="1"/>
</dbReference>
<protein>
    <recommendedName>
        <fullName>Lon protease 2</fullName>
        <ecNumber>3.4.21.53</ecNumber>
    </recommendedName>
    <alternativeName>
        <fullName>ATP-dependent protease La 2</fullName>
    </alternativeName>
</protein>
<accession>O51558</accession>
<comment type="function">
    <text evidence="1">ATP-dependent serine protease that mediates the selective degradation of mutant and abnormal proteins as well as certain short-lived regulatory proteins. Required for cellular homeostasis and for survival from DNA damage and developmental changes induced by stress. Degrades polypeptides processively to yield small peptide fragments that are 5 to 10 amino acids long. Binds to DNA in a double-stranded, site-specific manner (By similarity).</text>
</comment>
<comment type="catalytic activity">
    <reaction evidence="4">
        <text>Hydrolysis of proteins in presence of ATP.</text>
        <dbReference type="EC" id="3.4.21.53"/>
    </reaction>
</comment>
<comment type="subunit">
    <text evidence="1">Homohexamer. Organized in a ring with a central cavity (By similarity).</text>
</comment>
<comment type="subcellular location">
    <subcellularLocation>
        <location evidence="1">Cytoplasm</location>
    </subcellularLocation>
</comment>
<comment type="induction">
    <text evidence="1">By heat shock.</text>
</comment>
<comment type="similarity">
    <text evidence="2">Belongs to the peptidase S16 family.</text>
</comment>
<name>LON2_BORBU</name>
<gene>
    <name type="primary">lon2</name>
    <name type="ordered locus">BB_0613</name>
</gene>
<proteinExistence type="inferred from homology"/>
<keyword id="KW-0067">ATP-binding</keyword>
<keyword id="KW-0963">Cytoplasm</keyword>
<keyword id="KW-0378">Hydrolase</keyword>
<keyword id="KW-0547">Nucleotide-binding</keyword>
<keyword id="KW-0645">Protease</keyword>
<keyword id="KW-1185">Reference proteome</keyword>
<keyword id="KW-0720">Serine protease</keyword>
<keyword id="KW-0346">Stress response</keyword>
<sequence length="796" mass="90334">MIKNRKEDLPIVILKENVLFPNITLWVTFDNEYVINSIAQSMLEERLILFAYSNEPNCDESDRGVVKNLCSVGTYSKLIQVIKISKDVIKVLVECQSRVLIDSVSKKNDYLRAKVTFVPDSSGLNRELFTYSKFLKETYEAYRNSLSLKSYDADNEPINYFENPSKLVDIIASNSNLENSIKLELLQELNVKTRIEKLIVNLSIEIDLLDLKKDINSKVRAKLDKGQRDYFLSEQVKEIQKRLGKDENDYIDRLNSKDIPEDVKSKIEKEISRLSKMQMNSPDANIIRSYIELILDLPWNENTVMKNHLSEIEFILRNSHYGMDEAKEKIINFLAVYQINSKVKAPILCLVGPPGIGKTSLVESIARSLSREFVKISLGGLRDEAEIRGHRRTYVGSLPGVFISAMKRSGKSNPVILLDEIDKINSSYKGNPESALLEVLDPEQNYKFIDHYLEIPYDLSNVLFVTTANSLNGMSKPLLDRMEIIKVEGYSYIEKLEIAKIFLIPSIIKESFLDKVYIRIEDDVIFNLIRNYTMESGVRGLKRVLTNLIRRLVRELLYEYSKDQIIKGNFYSPSSLIHGNNSLFTHDPDIPGIYKIININNYYNYVDTEDNLDLIKIDSSGFVYGLAWTNYGGTVLPVEATKFEKKGDIILTGSLGAIMKESAQLAYSIVKTYSSKLNFDVKESPEIHLHFPEGATPKDGPSAGITIATAIASILSDKKVPLDLAMTGEVTLKGFVLPVGGIKEKVLAAYRNGISKVILPKDNKKDYSKLPEEVKDNIDVKFVSSLEEVFDYLNII</sequence>
<organism>
    <name type="scientific">Borreliella burgdorferi (strain ATCC 35210 / DSM 4680 / CIP 102532 / B31)</name>
    <name type="common">Borrelia burgdorferi</name>
    <dbReference type="NCBI Taxonomy" id="224326"/>
    <lineage>
        <taxon>Bacteria</taxon>
        <taxon>Pseudomonadati</taxon>
        <taxon>Spirochaetota</taxon>
        <taxon>Spirochaetia</taxon>
        <taxon>Spirochaetales</taxon>
        <taxon>Borreliaceae</taxon>
        <taxon>Borreliella</taxon>
    </lineage>
</organism>
<reference key="1">
    <citation type="journal article" date="1997" name="Nature">
        <title>Genomic sequence of a Lyme disease spirochaete, Borrelia burgdorferi.</title>
        <authorList>
            <person name="Fraser C.M."/>
            <person name="Casjens S."/>
            <person name="Huang W.M."/>
            <person name="Sutton G.G."/>
            <person name="Clayton R.A."/>
            <person name="Lathigra R."/>
            <person name="White O."/>
            <person name="Ketchum K.A."/>
            <person name="Dodson R.J."/>
            <person name="Hickey E.K."/>
            <person name="Gwinn M.L."/>
            <person name="Dougherty B.A."/>
            <person name="Tomb J.-F."/>
            <person name="Fleischmann R.D."/>
            <person name="Richardson D.L."/>
            <person name="Peterson J.D."/>
            <person name="Kerlavage A.R."/>
            <person name="Quackenbush J."/>
            <person name="Salzberg S.L."/>
            <person name="Hanson M."/>
            <person name="van Vugt R."/>
            <person name="Palmer N."/>
            <person name="Adams M.D."/>
            <person name="Gocayne J.D."/>
            <person name="Weidman J.F."/>
            <person name="Utterback T.R."/>
            <person name="Watthey L."/>
            <person name="McDonald L.A."/>
            <person name="Artiach P."/>
            <person name="Bowman C."/>
            <person name="Garland S.A."/>
            <person name="Fujii C."/>
            <person name="Cotton M.D."/>
            <person name="Horst K."/>
            <person name="Roberts K.M."/>
            <person name="Hatch B."/>
            <person name="Smith H.O."/>
            <person name="Venter J.C."/>
        </authorList>
    </citation>
    <scope>NUCLEOTIDE SEQUENCE [LARGE SCALE GENOMIC DNA]</scope>
    <source>
        <strain>ATCC 35210 / DSM 4680 / CIP 102532 / B31</strain>
    </source>
</reference>
<feature type="chain" id="PRO_0000076119" description="Lon protease 2">
    <location>
        <begin position="1"/>
        <end position="796"/>
    </location>
</feature>
<feature type="domain" description="Lon N-terminal" evidence="3">
    <location>
        <begin position="9"/>
        <end position="206"/>
    </location>
</feature>
<feature type="domain" description="Lon proteolytic" evidence="2">
    <location>
        <begin position="617"/>
        <end position="796"/>
    </location>
</feature>
<feature type="active site" evidence="4">
    <location>
        <position position="702"/>
    </location>
</feature>
<feature type="active site" evidence="4">
    <location>
        <position position="745"/>
    </location>
</feature>
<feature type="binding site" evidence="1">
    <location>
        <begin position="352"/>
        <end position="359"/>
    </location>
    <ligand>
        <name>ATP</name>
        <dbReference type="ChEBI" id="CHEBI:30616"/>
    </ligand>
</feature>
<evidence type="ECO:0000250" key="1"/>
<evidence type="ECO:0000255" key="2">
    <source>
        <dbReference type="PROSITE-ProRule" id="PRU01122"/>
    </source>
</evidence>
<evidence type="ECO:0000255" key="3">
    <source>
        <dbReference type="PROSITE-ProRule" id="PRU01123"/>
    </source>
</evidence>
<evidence type="ECO:0000255" key="4">
    <source>
        <dbReference type="PROSITE-ProRule" id="PRU10087"/>
    </source>
</evidence>